<geneLocation type="plasmid">
    <name>R16</name>
</geneLocation>
<dbReference type="EMBL" id="X12833">
    <property type="protein sequence ID" value="CAA31320.1"/>
    <property type="molecule type" value="Genomic_DNA"/>
</dbReference>
<dbReference type="PIR" id="S02763">
    <property type="entry name" value="S02763"/>
</dbReference>
<dbReference type="RefSeq" id="WP_001302699.1">
    <property type="nucleotide sequence ID" value="NZ_WWEL01000051.1"/>
</dbReference>
<dbReference type="SMR" id="P11902"/>
<dbReference type="PATRIC" id="fig|562.11480.peg.1419"/>
<dbReference type="GO" id="GO:0005886">
    <property type="term" value="C:plasma membrane"/>
    <property type="evidence" value="ECO:0007669"/>
    <property type="project" value="UniProtKB-SubCell"/>
</dbReference>
<dbReference type="InterPro" id="IPR000021">
    <property type="entry name" value="Hok/gef_toxin"/>
</dbReference>
<dbReference type="InterPro" id="IPR018084">
    <property type="entry name" value="Hok/gef_toxin_CS"/>
</dbReference>
<dbReference type="Pfam" id="PF01848">
    <property type="entry name" value="HOK_GEF"/>
    <property type="match status" value="1"/>
</dbReference>
<dbReference type="PRINTS" id="PR00281">
    <property type="entry name" value="HOKGEFTOXIC"/>
</dbReference>
<dbReference type="PROSITE" id="PS00556">
    <property type="entry name" value="HOK_GEF"/>
    <property type="match status" value="1"/>
</dbReference>
<keyword id="KW-0997">Cell inner membrane</keyword>
<keyword id="KW-1003">Cell membrane</keyword>
<keyword id="KW-0472">Membrane</keyword>
<keyword id="KW-0614">Plasmid</keyword>
<keyword id="KW-1277">Toxin-antitoxin system</keyword>
<keyword id="KW-0812">Transmembrane</keyword>
<keyword id="KW-1133">Transmembrane helix</keyword>
<sequence>MPQRTFLMMLIVVCVTILCFVWMVRDSLCGFRIEQGNTVLVATLAYEVKR</sequence>
<organism>
    <name type="scientific">Escherichia coli</name>
    <dbReference type="NCBI Taxonomy" id="562"/>
    <lineage>
        <taxon>Bacteria</taxon>
        <taxon>Pseudomonadati</taxon>
        <taxon>Pseudomonadota</taxon>
        <taxon>Gammaproteobacteria</taxon>
        <taxon>Enterobacterales</taxon>
        <taxon>Enterobacteriaceae</taxon>
        <taxon>Escherichia</taxon>
    </lineage>
</organism>
<comment type="function">
    <text>When overexpressed kill the cells from the inside by interfering with a vital function in the cell membrane.</text>
</comment>
<comment type="function">
    <text evidence="1 3">Toxic component of a type I toxin-antitoxin (TA) system (By similarity). When expressed is involved in cellular Mg(2+) release and degradation of stable RNA (PubMed:2465777).</text>
</comment>
<comment type="subcellular location">
    <subcellularLocation>
        <location evidence="1">Cell inner membrane</location>
        <topology evidence="4">Single-pass membrane protein</topology>
    </subcellularLocation>
</comment>
<comment type="induction">
    <text evidence="3">In the presence of rifampicin at 42 degrees Celsius.</text>
</comment>
<comment type="similarity">
    <text evidence="4">Belongs to the Hok/Gef family.</text>
</comment>
<reference key="1">
    <citation type="journal article" date="1989" name="Biochim. Biophys. Acta">
        <title>The pnd gene in E. coli plasmid R16: nucleotide sequence and gene expression leading to cell Mg2+ release and stable RNA degradation.</title>
        <authorList>
            <person name="Sakikawa T."/>
            <person name="Akimoto S."/>
            <person name="Ohnishi Y."/>
        </authorList>
    </citation>
    <scope>NUCLEOTIDE SEQUENCE [GENOMIC DNA]</scope>
    <scope>FUNCTION</scope>
    <scope>INDUCTION</scope>
</reference>
<proteinExistence type="evidence at transcript level"/>
<name>PNDA1_ECOLX</name>
<evidence type="ECO:0000250" key="1">
    <source>
        <dbReference type="UniProtKB" id="P0ACG4"/>
    </source>
</evidence>
<evidence type="ECO:0000255" key="2"/>
<evidence type="ECO:0000269" key="3">
    <source>
    </source>
</evidence>
<evidence type="ECO:0000305" key="4"/>
<accession>P11902</accession>
<feature type="chain" id="PRO_0000199043" description="Protein PndA">
    <location>
        <begin position="1"/>
        <end position="50"/>
    </location>
</feature>
<feature type="transmembrane region" description="Helical" evidence="2">
    <location>
        <begin position="5"/>
        <end position="25"/>
    </location>
</feature>
<protein>
    <recommendedName>
        <fullName>Protein PndA</fullName>
    </recommendedName>
</protein>
<gene>
    <name type="primary">pndA</name>
    <name type="synonym">pnd</name>
</gene>